<comment type="function">
    <text evidence="1">Catalyzes the isomerization between 2-isopropylmalate and 3-isopropylmalate, via the formation of 2-isopropylmaleate.</text>
</comment>
<comment type="catalytic activity">
    <reaction evidence="1">
        <text>(2R,3S)-3-isopropylmalate = (2S)-2-isopropylmalate</text>
        <dbReference type="Rhea" id="RHEA:32287"/>
        <dbReference type="ChEBI" id="CHEBI:1178"/>
        <dbReference type="ChEBI" id="CHEBI:35121"/>
        <dbReference type="EC" id="4.2.1.33"/>
    </reaction>
</comment>
<comment type="cofactor">
    <cofactor evidence="1">
        <name>[4Fe-4S] cluster</name>
        <dbReference type="ChEBI" id="CHEBI:49883"/>
    </cofactor>
    <text evidence="1">Binds 1 [4Fe-4S] cluster per subunit.</text>
</comment>
<comment type="pathway">
    <text evidence="1">Amino-acid biosynthesis; L-leucine biosynthesis; L-leucine from 3-methyl-2-oxobutanoate: step 2/4.</text>
</comment>
<comment type="subunit">
    <text evidence="1">Heterodimer of LeuC and LeuD.</text>
</comment>
<comment type="similarity">
    <text evidence="1">Belongs to the aconitase/IPM isomerase family. LeuC type 1 subfamily.</text>
</comment>
<gene>
    <name evidence="1" type="primary">leuC</name>
    <name type="ordered locus">XC_0833</name>
</gene>
<name>LEUC_XANC8</name>
<accession>Q4UYG5</accession>
<proteinExistence type="inferred from homology"/>
<reference key="1">
    <citation type="journal article" date="2005" name="Genome Res.">
        <title>Comparative and functional genomic analyses of the pathogenicity of phytopathogen Xanthomonas campestris pv. campestris.</title>
        <authorList>
            <person name="Qian W."/>
            <person name="Jia Y."/>
            <person name="Ren S.-X."/>
            <person name="He Y.-Q."/>
            <person name="Feng J.-X."/>
            <person name="Lu L.-F."/>
            <person name="Sun Q."/>
            <person name="Ying G."/>
            <person name="Tang D.-J."/>
            <person name="Tang H."/>
            <person name="Wu W."/>
            <person name="Hao P."/>
            <person name="Wang L."/>
            <person name="Jiang B.-L."/>
            <person name="Zeng S."/>
            <person name="Gu W.-Y."/>
            <person name="Lu G."/>
            <person name="Rong L."/>
            <person name="Tian Y."/>
            <person name="Yao Z."/>
            <person name="Fu G."/>
            <person name="Chen B."/>
            <person name="Fang R."/>
            <person name="Qiang B."/>
            <person name="Chen Z."/>
            <person name="Zhao G.-P."/>
            <person name="Tang J.-L."/>
            <person name="He C."/>
        </authorList>
    </citation>
    <scope>NUCLEOTIDE SEQUENCE [LARGE SCALE GENOMIC DNA]</scope>
    <source>
        <strain>8004</strain>
    </source>
</reference>
<protein>
    <recommendedName>
        <fullName evidence="1">3-isopropylmalate dehydratase large subunit</fullName>
        <ecNumber evidence="1">4.2.1.33</ecNumber>
    </recommendedName>
    <alternativeName>
        <fullName evidence="1">Alpha-IPM isomerase</fullName>
        <shortName evidence="1">IPMI</shortName>
    </alternativeName>
    <alternativeName>
        <fullName evidence="1">Isopropylmalate isomerase</fullName>
    </alternativeName>
</protein>
<dbReference type="EC" id="4.2.1.33" evidence="1"/>
<dbReference type="EMBL" id="CP000050">
    <property type="protein sequence ID" value="AAY47908.1"/>
    <property type="molecule type" value="Genomic_DNA"/>
</dbReference>
<dbReference type="RefSeq" id="WP_011038430.1">
    <property type="nucleotide sequence ID" value="NZ_CP155948.1"/>
</dbReference>
<dbReference type="SMR" id="Q4UYG5"/>
<dbReference type="GeneID" id="58012135"/>
<dbReference type="KEGG" id="xcb:XC_0833"/>
<dbReference type="HOGENOM" id="CLU_006714_3_4_6"/>
<dbReference type="UniPathway" id="UPA00048">
    <property type="reaction ID" value="UER00071"/>
</dbReference>
<dbReference type="Proteomes" id="UP000000420">
    <property type="component" value="Chromosome"/>
</dbReference>
<dbReference type="GO" id="GO:0003861">
    <property type="term" value="F:3-isopropylmalate dehydratase activity"/>
    <property type="evidence" value="ECO:0007669"/>
    <property type="project" value="UniProtKB-UniRule"/>
</dbReference>
<dbReference type="GO" id="GO:0051539">
    <property type="term" value="F:4 iron, 4 sulfur cluster binding"/>
    <property type="evidence" value="ECO:0007669"/>
    <property type="project" value="UniProtKB-KW"/>
</dbReference>
<dbReference type="GO" id="GO:0046872">
    <property type="term" value="F:metal ion binding"/>
    <property type="evidence" value="ECO:0007669"/>
    <property type="project" value="UniProtKB-KW"/>
</dbReference>
<dbReference type="GO" id="GO:0009098">
    <property type="term" value="P:L-leucine biosynthetic process"/>
    <property type="evidence" value="ECO:0007669"/>
    <property type="project" value="UniProtKB-UniRule"/>
</dbReference>
<dbReference type="CDD" id="cd01583">
    <property type="entry name" value="IPMI"/>
    <property type="match status" value="1"/>
</dbReference>
<dbReference type="FunFam" id="3.30.499.10:FF:000007">
    <property type="entry name" value="3-isopropylmalate dehydratase large subunit"/>
    <property type="match status" value="1"/>
</dbReference>
<dbReference type="Gene3D" id="3.30.499.10">
    <property type="entry name" value="Aconitase, domain 3"/>
    <property type="match status" value="2"/>
</dbReference>
<dbReference type="HAMAP" id="MF_01026">
    <property type="entry name" value="LeuC_type1"/>
    <property type="match status" value="1"/>
</dbReference>
<dbReference type="InterPro" id="IPR004430">
    <property type="entry name" value="3-IsopropMal_deHydase_lsu"/>
</dbReference>
<dbReference type="InterPro" id="IPR015931">
    <property type="entry name" value="Acnase/IPM_dHydase_lsu_aba_1/3"/>
</dbReference>
<dbReference type="InterPro" id="IPR001030">
    <property type="entry name" value="Acoase/IPM_deHydtase_lsu_aba"/>
</dbReference>
<dbReference type="InterPro" id="IPR018136">
    <property type="entry name" value="Aconitase_4Fe-4S_BS"/>
</dbReference>
<dbReference type="InterPro" id="IPR036008">
    <property type="entry name" value="Aconitase_4Fe-4S_dom"/>
</dbReference>
<dbReference type="InterPro" id="IPR050067">
    <property type="entry name" value="IPM_dehydratase_rel_enz"/>
</dbReference>
<dbReference type="InterPro" id="IPR033941">
    <property type="entry name" value="IPMI_cat"/>
</dbReference>
<dbReference type="NCBIfam" id="TIGR00170">
    <property type="entry name" value="leuC"/>
    <property type="match status" value="1"/>
</dbReference>
<dbReference type="NCBIfam" id="NF004016">
    <property type="entry name" value="PRK05478.1"/>
    <property type="match status" value="1"/>
</dbReference>
<dbReference type="NCBIfam" id="NF009116">
    <property type="entry name" value="PRK12466.1"/>
    <property type="match status" value="1"/>
</dbReference>
<dbReference type="PANTHER" id="PTHR43822:SF9">
    <property type="entry name" value="3-ISOPROPYLMALATE DEHYDRATASE"/>
    <property type="match status" value="1"/>
</dbReference>
<dbReference type="PANTHER" id="PTHR43822">
    <property type="entry name" value="HOMOACONITASE, MITOCHONDRIAL-RELATED"/>
    <property type="match status" value="1"/>
</dbReference>
<dbReference type="Pfam" id="PF00330">
    <property type="entry name" value="Aconitase"/>
    <property type="match status" value="1"/>
</dbReference>
<dbReference type="PRINTS" id="PR00415">
    <property type="entry name" value="ACONITASE"/>
</dbReference>
<dbReference type="SUPFAM" id="SSF53732">
    <property type="entry name" value="Aconitase iron-sulfur domain"/>
    <property type="match status" value="1"/>
</dbReference>
<dbReference type="PROSITE" id="PS00450">
    <property type="entry name" value="ACONITASE_1"/>
    <property type="match status" value="1"/>
</dbReference>
<dbReference type="PROSITE" id="PS01244">
    <property type="entry name" value="ACONITASE_2"/>
    <property type="match status" value="1"/>
</dbReference>
<evidence type="ECO:0000255" key="1">
    <source>
        <dbReference type="HAMAP-Rule" id="MF_01026"/>
    </source>
</evidence>
<feature type="chain" id="PRO_0000076843" description="3-isopropylmalate dehydratase large subunit">
    <location>
        <begin position="1"/>
        <end position="479"/>
    </location>
</feature>
<feature type="binding site" evidence="1">
    <location>
        <position position="353"/>
    </location>
    <ligand>
        <name>[4Fe-4S] cluster</name>
        <dbReference type="ChEBI" id="CHEBI:49883"/>
    </ligand>
</feature>
<feature type="binding site" evidence="1">
    <location>
        <position position="414"/>
    </location>
    <ligand>
        <name>[4Fe-4S] cluster</name>
        <dbReference type="ChEBI" id="CHEBI:49883"/>
    </ligand>
</feature>
<feature type="binding site" evidence="1">
    <location>
        <position position="417"/>
    </location>
    <ligand>
        <name>[4Fe-4S] cluster</name>
        <dbReference type="ChEBI" id="CHEBI:49883"/>
    </ligand>
</feature>
<keyword id="KW-0004">4Fe-4S</keyword>
<keyword id="KW-0028">Amino-acid biosynthesis</keyword>
<keyword id="KW-0100">Branched-chain amino acid biosynthesis</keyword>
<keyword id="KW-0408">Iron</keyword>
<keyword id="KW-0411">Iron-sulfur</keyword>
<keyword id="KW-0432">Leucine biosynthesis</keyword>
<keyword id="KW-0456">Lyase</keyword>
<keyword id="KW-0479">Metal-binding</keyword>
<sequence>MTAKTLYDKLWEMHEVTRRDDGSSLIYIDRHILHEVTSPQAFEGLRLAGRKPWRIDANIATPDHNVPTTRAERQGGLESISDEVSRLQVQTLDENCDDFGILEFKMNDTRQGIVHVVGPEQGATLPGMTVVCGDSHTSTHGAFGALAHGIGTSEVEHVLATQCLIAKKMKNLQVRVEGTLPFGVTAKDIVLAVIGKIGTAGGNGHALEFAGSAIRALSMEGRMTICNMSIEAGARVGMVAVDEKTIAYVKGRPFAPKGADWDAAVALWRTLVSDADASFDTVVELRAEDIKPQVSWGTSPEMVVAIDQQVPDPAAEQDPTKRDSIQRALKYMGLRANQPITEIHLDRVFIGSCTNSRIEDLRAAAAVAKGRKVASTIKQALVVPGSGLVKAQAEAEGLDKIFLDAGFEWREPGCSMCLAMNPDKLGSGEHCASTSNRNFEGRQGAGGRTHLVSPAMAAAAAVSGHFVDVRELQGIETRE</sequence>
<organism>
    <name type="scientific">Xanthomonas campestris pv. campestris (strain 8004)</name>
    <dbReference type="NCBI Taxonomy" id="314565"/>
    <lineage>
        <taxon>Bacteria</taxon>
        <taxon>Pseudomonadati</taxon>
        <taxon>Pseudomonadota</taxon>
        <taxon>Gammaproteobacteria</taxon>
        <taxon>Lysobacterales</taxon>
        <taxon>Lysobacteraceae</taxon>
        <taxon>Xanthomonas</taxon>
    </lineage>
</organism>